<evidence type="ECO:0000250" key="1"/>
<evidence type="ECO:0000305" key="2"/>
<keyword id="KW-0931">ER-Golgi transport</keyword>
<keyword id="KW-0472">Membrane</keyword>
<keyword id="KW-0653">Protein transport</keyword>
<keyword id="KW-0802">TPR repeat</keyword>
<keyword id="KW-0813">Transport</keyword>
<dbReference type="EMBL" id="AB001375">
    <property type="protein sequence ID" value="BAA19246.1"/>
    <property type="molecule type" value="mRNA"/>
</dbReference>
<dbReference type="PIR" id="T50776">
    <property type="entry name" value="T50776"/>
</dbReference>
<dbReference type="RefSeq" id="NP_001268055.1">
    <property type="nucleotide sequence ID" value="NM_001281126.1"/>
</dbReference>
<dbReference type="SMR" id="P93798"/>
<dbReference type="GeneID" id="100232837"/>
<dbReference type="KEGG" id="vvi:100232837"/>
<dbReference type="eggNOG" id="KOG1586">
    <property type="taxonomic scope" value="Eukaryota"/>
</dbReference>
<dbReference type="OrthoDB" id="849873at71240"/>
<dbReference type="ExpressionAtlas" id="P93798">
    <property type="expression patterns" value="baseline and differential"/>
</dbReference>
<dbReference type="GO" id="GO:0016020">
    <property type="term" value="C:membrane"/>
    <property type="evidence" value="ECO:0007669"/>
    <property type="project" value="UniProtKB-SubCell"/>
</dbReference>
<dbReference type="GO" id="GO:0006886">
    <property type="term" value="P:intracellular protein transport"/>
    <property type="evidence" value="ECO:0007669"/>
    <property type="project" value="InterPro"/>
</dbReference>
<dbReference type="GO" id="GO:0016192">
    <property type="term" value="P:vesicle-mediated transport"/>
    <property type="evidence" value="ECO:0007669"/>
    <property type="project" value="UniProtKB-KW"/>
</dbReference>
<dbReference type="CDD" id="cd15832">
    <property type="entry name" value="SNAP"/>
    <property type="match status" value="1"/>
</dbReference>
<dbReference type="FunFam" id="1.25.40.10:FF:000049">
    <property type="entry name" value="Alpha-soluble NSF attachment protein-like"/>
    <property type="match status" value="1"/>
</dbReference>
<dbReference type="Gene3D" id="1.25.40.10">
    <property type="entry name" value="Tetratricopeptide repeat domain"/>
    <property type="match status" value="1"/>
</dbReference>
<dbReference type="InterPro" id="IPR000744">
    <property type="entry name" value="NSF_attach"/>
</dbReference>
<dbReference type="InterPro" id="IPR011990">
    <property type="entry name" value="TPR-like_helical_dom_sf"/>
</dbReference>
<dbReference type="InterPro" id="IPR019734">
    <property type="entry name" value="TPR_rpt"/>
</dbReference>
<dbReference type="PANTHER" id="PTHR13768:SF8">
    <property type="entry name" value="ALPHA-SOLUBLE NSF ATTACHMENT PROTEIN"/>
    <property type="match status" value="1"/>
</dbReference>
<dbReference type="PANTHER" id="PTHR13768">
    <property type="entry name" value="SOLUBLE NSF ATTACHMENT PROTEIN SNAP"/>
    <property type="match status" value="1"/>
</dbReference>
<dbReference type="Pfam" id="PF14938">
    <property type="entry name" value="SNAP"/>
    <property type="match status" value="1"/>
</dbReference>
<dbReference type="PRINTS" id="PR00448">
    <property type="entry name" value="NSFATTACHMNT"/>
</dbReference>
<dbReference type="SUPFAM" id="SSF48452">
    <property type="entry name" value="TPR-like"/>
    <property type="match status" value="1"/>
</dbReference>
<dbReference type="PROSITE" id="PS50005">
    <property type="entry name" value="TPR"/>
    <property type="match status" value="1"/>
</dbReference>
<reference key="1">
    <citation type="journal article" date="1997" name="DNA Seq.">
        <title>Nucleotide sequence of grapevine (Vitis vinifera) cDNA similar to SNAP proteins.</title>
        <authorList>
            <person name="Matsumoto S."/>
            <person name="Dry I.B."/>
            <person name="Thomas M."/>
        </authorList>
    </citation>
    <scope>NUCLEOTIDE SEQUENCE [MRNA]</scope>
    <source>
        <strain>cv. Shiraz</strain>
        <tissue>Fruit</tissue>
    </source>
</reference>
<sequence length="289" mass="32486">MADNIQRGEEFEKKAEKKISGWGLFGSKYEDAADFYDKAANCFKLAKSWDRAGSTYVKLSTVIQSSDSKHEAAQAYADAGHCYKKTSAKEAISCLEQAAYLFLDNGRFNMAGKYYKEIAELYELEQNFEQAIIYFEKAADIYQSEEATTAANQCNAKVAQFAAQLEQYQKAIQIYEDIGRPSLNNNLLKYGVKGHLLNAGICQLCKGDVVAITNALDRYQEMDPTFSGTREYKLLVDLAAAVDEEDVVKFTDAVKEFDSMTQLDAWKTTLLLRVKEAIKAKELEEDDLT</sequence>
<comment type="function">
    <text evidence="1">Required for vesicular transport between the endoplasmic reticulum and the Golgi apparatus.</text>
</comment>
<comment type="subcellular location">
    <subcellularLocation>
        <location evidence="1">Membrane</location>
        <topology evidence="1">Peripheral membrane protein</topology>
    </subcellularLocation>
</comment>
<comment type="similarity">
    <text evidence="2">Belongs to the SNAP family.</text>
</comment>
<feature type="chain" id="PRO_0000219069" description="Alpha-soluble NSF attachment protein">
    <location>
        <begin position="1"/>
        <end position="289"/>
    </location>
</feature>
<feature type="repeat" description="TPR">
    <location>
        <begin position="112"/>
        <end position="145"/>
    </location>
</feature>
<proteinExistence type="evidence at transcript level"/>
<name>SNAA_VITVI</name>
<accession>P93798</accession>
<protein>
    <recommendedName>
        <fullName>Alpha-soluble NSF attachment protein</fullName>
        <shortName>Alpha-SNAP</shortName>
    </recommendedName>
    <alternativeName>
        <fullName>N-ethylmaleimide-sensitive factor attachment protein alpha</fullName>
    </alternativeName>
</protein>
<organism>
    <name type="scientific">Vitis vinifera</name>
    <name type="common">Grape</name>
    <dbReference type="NCBI Taxonomy" id="29760"/>
    <lineage>
        <taxon>Eukaryota</taxon>
        <taxon>Viridiplantae</taxon>
        <taxon>Streptophyta</taxon>
        <taxon>Embryophyta</taxon>
        <taxon>Tracheophyta</taxon>
        <taxon>Spermatophyta</taxon>
        <taxon>Magnoliopsida</taxon>
        <taxon>eudicotyledons</taxon>
        <taxon>Gunneridae</taxon>
        <taxon>Pentapetalae</taxon>
        <taxon>rosids</taxon>
        <taxon>Vitales</taxon>
        <taxon>Vitaceae</taxon>
        <taxon>Viteae</taxon>
        <taxon>Vitis</taxon>
    </lineage>
</organism>